<accession>A8MHH1</accession>
<comment type="function">
    <text evidence="1">Catalyzes the reversible phosphorylation of UMP to UDP.</text>
</comment>
<comment type="catalytic activity">
    <reaction evidence="1">
        <text>UMP + ATP = UDP + ADP</text>
        <dbReference type="Rhea" id="RHEA:24400"/>
        <dbReference type="ChEBI" id="CHEBI:30616"/>
        <dbReference type="ChEBI" id="CHEBI:57865"/>
        <dbReference type="ChEBI" id="CHEBI:58223"/>
        <dbReference type="ChEBI" id="CHEBI:456216"/>
        <dbReference type="EC" id="2.7.4.22"/>
    </reaction>
</comment>
<comment type="activity regulation">
    <text evidence="1">Allosterically activated by GTP. Inhibited by UTP.</text>
</comment>
<comment type="pathway">
    <text evidence="1">Pyrimidine metabolism; CTP biosynthesis via de novo pathway; UDP from UMP (UMPK route): step 1/1.</text>
</comment>
<comment type="subunit">
    <text evidence="1">Homohexamer.</text>
</comment>
<comment type="subcellular location">
    <subcellularLocation>
        <location evidence="1">Cytoplasm</location>
    </subcellularLocation>
</comment>
<comment type="similarity">
    <text evidence="1">Belongs to the UMP kinase family.</text>
</comment>
<reference key="1">
    <citation type="submission" date="2007-10" db="EMBL/GenBank/DDBJ databases">
        <title>Complete genome of Alkaliphilus oremlandii OhILAs.</title>
        <authorList>
            <person name="Copeland A."/>
            <person name="Lucas S."/>
            <person name="Lapidus A."/>
            <person name="Barry K."/>
            <person name="Detter J.C."/>
            <person name="Glavina del Rio T."/>
            <person name="Hammon N."/>
            <person name="Israni S."/>
            <person name="Dalin E."/>
            <person name="Tice H."/>
            <person name="Pitluck S."/>
            <person name="Chain P."/>
            <person name="Malfatti S."/>
            <person name="Shin M."/>
            <person name="Vergez L."/>
            <person name="Schmutz J."/>
            <person name="Larimer F."/>
            <person name="Land M."/>
            <person name="Hauser L."/>
            <person name="Kyrpides N."/>
            <person name="Mikhailova N."/>
            <person name="Stolz J.F."/>
            <person name="Dawson A."/>
            <person name="Fisher E."/>
            <person name="Crable B."/>
            <person name="Perera E."/>
            <person name="Lisak J."/>
            <person name="Ranganathan M."/>
            <person name="Basu P."/>
            <person name="Richardson P."/>
        </authorList>
    </citation>
    <scope>NUCLEOTIDE SEQUENCE [LARGE SCALE GENOMIC DNA]</scope>
    <source>
        <strain>OhILAs</strain>
    </source>
</reference>
<gene>
    <name evidence="1" type="primary">pyrH</name>
    <name type="ordered locus">Clos_1515</name>
</gene>
<protein>
    <recommendedName>
        <fullName evidence="1">Uridylate kinase</fullName>
        <shortName evidence="1">UK</shortName>
        <ecNumber evidence="1">2.7.4.22</ecNumber>
    </recommendedName>
    <alternativeName>
        <fullName evidence="1">Uridine monophosphate kinase</fullName>
        <shortName evidence="1">UMP kinase</shortName>
        <shortName evidence="1">UMPK</shortName>
    </alternativeName>
</protein>
<organism>
    <name type="scientific">Alkaliphilus oremlandii (strain OhILAs)</name>
    <name type="common">Clostridium oremlandii (strain OhILAs)</name>
    <dbReference type="NCBI Taxonomy" id="350688"/>
    <lineage>
        <taxon>Bacteria</taxon>
        <taxon>Bacillati</taxon>
        <taxon>Bacillota</taxon>
        <taxon>Clostridia</taxon>
        <taxon>Peptostreptococcales</taxon>
        <taxon>Natronincolaceae</taxon>
        <taxon>Alkaliphilus</taxon>
    </lineage>
</organism>
<sequence length="236" mass="25844">MLEPQYKRVLLKLSGEALAGEKGFGLDPNVVTNIATQVKDIVNMGVEVAIVVGGGNYWRGRTGEGMDRTTADYMGMLATVINALALQDSLENLDVLTRVQSAIEMRQIAEPYIRRRAVRHLEKNRVVIFAAGTGNPYFSTDTTAALRAAEIEADVILLAKNVDGVYSADPSIDKTATKFNELTYIDVLKMGLKVMDSTAISLCMDNSIPIKVFGLEDPENIKKVIYGDKIGTYIYS</sequence>
<feature type="chain" id="PRO_1000066737" description="Uridylate kinase">
    <location>
        <begin position="1"/>
        <end position="236"/>
    </location>
</feature>
<feature type="region of interest" description="Involved in allosteric activation by GTP" evidence="1">
    <location>
        <begin position="20"/>
        <end position="25"/>
    </location>
</feature>
<feature type="binding site" evidence="1">
    <location>
        <begin position="12"/>
        <end position="15"/>
    </location>
    <ligand>
        <name>ATP</name>
        <dbReference type="ChEBI" id="CHEBI:30616"/>
    </ligand>
</feature>
<feature type="binding site" evidence="1">
    <location>
        <position position="54"/>
    </location>
    <ligand>
        <name>UMP</name>
        <dbReference type="ChEBI" id="CHEBI:57865"/>
    </ligand>
</feature>
<feature type="binding site" evidence="1">
    <location>
        <position position="55"/>
    </location>
    <ligand>
        <name>ATP</name>
        <dbReference type="ChEBI" id="CHEBI:30616"/>
    </ligand>
</feature>
<feature type="binding site" evidence="1">
    <location>
        <position position="59"/>
    </location>
    <ligand>
        <name>ATP</name>
        <dbReference type="ChEBI" id="CHEBI:30616"/>
    </ligand>
</feature>
<feature type="binding site" evidence="1">
    <location>
        <position position="72"/>
    </location>
    <ligand>
        <name>UMP</name>
        <dbReference type="ChEBI" id="CHEBI:57865"/>
    </ligand>
</feature>
<feature type="binding site" evidence="1">
    <location>
        <begin position="133"/>
        <end position="140"/>
    </location>
    <ligand>
        <name>UMP</name>
        <dbReference type="ChEBI" id="CHEBI:57865"/>
    </ligand>
</feature>
<feature type="binding site" evidence="1">
    <location>
        <position position="161"/>
    </location>
    <ligand>
        <name>ATP</name>
        <dbReference type="ChEBI" id="CHEBI:30616"/>
    </ligand>
</feature>
<feature type="binding site" evidence="1">
    <location>
        <position position="166"/>
    </location>
    <ligand>
        <name>ATP</name>
        <dbReference type="ChEBI" id="CHEBI:30616"/>
    </ligand>
</feature>
<feature type="binding site" evidence="1">
    <location>
        <position position="169"/>
    </location>
    <ligand>
        <name>ATP</name>
        <dbReference type="ChEBI" id="CHEBI:30616"/>
    </ligand>
</feature>
<keyword id="KW-0021">Allosteric enzyme</keyword>
<keyword id="KW-0067">ATP-binding</keyword>
<keyword id="KW-0963">Cytoplasm</keyword>
<keyword id="KW-0418">Kinase</keyword>
<keyword id="KW-0547">Nucleotide-binding</keyword>
<keyword id="KW-0665">Pyrimidine biosynthesis</keyword>
<keyword id="KW-1185">Reference proteome</keyword>
<keyword id="KW-0808">Transferase</keyword>
<proteinExistence type="inferred from homology"/>
<dbReference type="EC" id="2.7.4.22" evidence="1"/>
<dbReference type="EMBL" id="CP000853">
    <property type="protein sequence ID" value="ABW19058.1"/>
    <property type="molecule type" value="Genomic_DNA"/>
</dbReference>
<dbReference type="RefSeq" id="WP_012159370.1">
    <property type="nucleotide sequence ID" value="NC_009922.1"/>
</dbReference>
<dbReference type="SMR" id="A8MHH1"/>
<dbReference type="STRING" id="350688.Clos_1515"/>
<dbReference type="KEGG" id="aoe:Clos_1515"/>
<dbReference type="eggNOG" id="COG0528">
    <property type="taxonomic scope" value="Bacteria"/>
</dbReference>
<dbReference type="HOGENOM" id="CLU_033861_0_0_9"/>
<dbReference type="OrthoDB" id="9807458at2"/>
<dbReference type="UniPathway" id="UPA00159">
    <property type="reaction ID" value="UER00275"/>
</dbReference>
<dbReference type="Proteomes" id="UP000000269">
    <property type="component" value="Chromosome"/>
</dbReference>
<dbReference type="GO" id="GO:0005737">
    <property type="term" value="C:cytoplasm"/>
    <property type="evidence" value="ECO:0007669"/>
    <property type="project" value="UniProtKB-SubCell"/>
</dbReference>
<dbReference type="GO" id="GO:0005524">
    <property type="term" value="F:ATP binding"/>
    <property type="evidence" value="ECO:0007669"/>
    <property type="project" value="UniProtKB-KW"/>
</dbReference>
<dbReference type="GO" id="GO:0033862">
    <property type="term" value="F:UMP kinase activity"/>
    <property type="evidence" value="ECO:0007669"/>
    <property type="project" value="UniProtKB-EC"/>
</dbReference>
<dbReference type="GO" id="GO:0044210">
    <property type="term" value="P:'de novo' CTP biosynthetic process"/>
    <property type="evidence" value="ECO:0007669"/>
    <property type="project" value="UniProtKB-UniRule"/>
</dbReference>
<dbReference type="GO" id="GO:0006225">
    <property type="term" value="P:UDP biosynthetic process"/>
    <property type="evidence" value="ECO:0007669"/>
    <property type="project" value="TreeGrafter"/>
</dbReference>
<dbReference type="CDD" id="cd04254">
    <property type="entry name" value="AAK_UMPK-PyrH-Ec"/>
    <property type="match status" value="1"/>
</dbReference>
<dbReference type="FunFam" id="3.40.1160.10:FF:000001">
    <property type="entry name" value="Uridylate kinase"/>
    <property type="match status" value="1"/>
</dbReference>
<dbReference type="Gene3D" id="3.40.1160.10">
    <property type="entry name" value="Acetylglutamate kinase-like"/>
    <property type="match status" value="1"/>
</dbReference>
<dbReference type="HAMAP" id="MF_01220_B">
    <property type="entry name" value="PyrH_B"/>
    <property type="match status" value="1"/>
</dbReference>
<dbReference type="InterPro" id="IPR036393">
    <property type="entry name" value="AceGlu_kinase-like_sf"/>
</dbReference>
<dbReference type="InterPro" id="IPR001048">
    <property type="entry name" value="Asp/Glu/Uridylate_kinase"/>
</dbReference>
<dbReference type="InterPro" id="IPR001057">
    <property type="entry name" value="Glu/AcGlu_kinase"/>
</dbReference>
<dbReference type="InterPro" id="IPR011817">
    <property type="entry name" value="Uridylate_kinase"/>
</dbReference>
<dbReference type="InterPro" id="IPR015963">
    <property type="entry name" value="Uridylate_kinase_bac"/>
</dbReference>
<dbReference type="NCBIfam" id="TIGR02075">
    <property type="entry name" value="pyrH_bact"/>
    <property type="match status" value="1"/>
</dbReference>
<dbReference type="PANTHER" id="PTHR42833">
    <property type="entry name" value="URIDYLATE KINASE"/>
    <property type="match status" value="1"/>
</dbReference>
<dbReference type="PANTHER" id="PTHR42833:SF4">
    <property type="entry name" value="URIDYLATE KINASE PUMPKIN, CHLOROPLASTIC"/>
    <property type="match status" value="1"/>
</dbReference>
<dbReference type="Pfam" id="PF00696">
    <property type="entry name" value="AA_kinase"/>
    <property type="match status" value="1"/>
</dbReference>
<dbReference type="PIRSF" id="PIRSF005650">
    <property type="entry name" value="Uridylate_kin"/>
    <property type="match status" value="1"/>
</dbReference>
<dbReference type="PRINTS" id="PR00474">
    <property type="entry name" value="GLU5KINASE"/>
</dbReference>
<dbReference type="SUPFAM" id="SSF53633">
    <property type="entry name" value="Carbamate kinase-like"/>
    <property type="match status" value="1"/>
</dbReference>
<name>PYRH_ALKOO</name>
<evidence type="ECO:0000255" key="1">
    <source>
        <dbReference type="HAMAP-Rule" id="MF_01220"/>
    </source>
</evidence>